<protein>
    <recommendedName>
        <fullName evidence="7">Type 3 secretion system chaperone YscE</fullName>
    </recommendedName>
    <alternativeName>
        <fullName evidence="7">Yersinia secretion component E</fullName>
    </alternativeName>
    <alternativeName>
        <fullName evidence="7">Yop proteins translocation protein E</fullName>
    </alternativeName>
</protein>
<keyword id="KW-0002">3D-structure</keyword>
<keyword id="KW-0963">Cytoplasm</keyword>
<keyword id="KW-0614">Plasmid</keyword>
<keyword id="KW-1185">Reference proteome</keyword>
<keyword id="KW-0843">Virulence</keyword>
<evidence type="ECO:0000250" key="1">
    <source>
        <dbReference type="UniProtKB" id="Q9I317"/>
    </source>
</evidence>
<evidence type="ECO:0000269" key="2">
    <source>
    </source>
</evidence>
<evidence type="ECO:0000269" key="3">
    <source>
    </source>
</evidence>
<evidence type="ECO:0000269" key="4">
    <source>
    </source>
</evidence>
<evidence type="ECO:0000269" key="5">
    <source>
    </source>
</evidence>
<evidence type="ECO:0000303" key="6">
    <source>
    </source>
</evidence>
<evidence type="ECO:0000305" key="7"/>
<evidence type="ECO:0000312" key="8">
    <source>
        <dbReference type="EMBL" id="AAC69779.1"/>
    </source>
</evidence>
<evidence type="ECO:0000312" key="9">
    <source>
        <dbReference type="EMBL" id="AYX17968.1"/>
    </source>
</evidence>
<evidence type="ECO:0000312" key="10">
    <source>
        <dbReference type="EMBL" id="CAB54931.1"/>
    </source>
</evidence>
<evidence type="ECO:0007744" key="11">
    <source>
        <dbReference type="PDB" id="1ZW0"/>
    </source>
</evidence>
<evidence type="ECO:0007744" key="12">
    <source>
        <dbReference type="PDB" id="2P58"/>
    </source>
</evidence>
<evidence type="ECO:0007829" key="13">
    <source>
        <dbReference type="PDB" id="1ZW0"/>
    </source>
</evidence>
<comment type="function">
    <text evidence="1 2 4 5">Chaperone of the type III secretion system (T3SS), also called injectisome, which is used to inject bacterial effector proteins into eukaryotic host cells (PubMed:18281060, PubMed:29458689). Along with YscG, prevents premature polymerization of the YscF/SctF needle protein within the cytoplasm (By similarity). Is also required for stable expression of cytosolic YscF and for YscF secretion (PubMed:29458689). Likely plays a role in targeting YscF present in the cytosolic YscEFG complex to the T3SS apparatus (PubMed:29458689). Required for Yop secretion (PubMed:11035761).</text>
</comment>
<comment type="subunit">
    <text evidence="2 3 4 5">Component of the heterodimeric YscE-YscG chaperone (PubMed:11035761, PubMed:18281060, PubMed:29458689). The YscE-YscG chaperone forms a stable ternary complex with YscF/SctF (PubMed:18281060). YscE interacts with YscG, but makes very little direct contact with YscF (PubMed:11035761, PubMed:18281060). Homodimer in solution (PubMed:16195558).</text>
</comment>
<comment type="subcellular location">
    <subcellularLocation>
        <location evidence="2">Cytoplasm</location>
    </subcellularLocation>
    <text evidence="2">Could be a peripheral membrane protein.</text>
</comment>
<comment type="disruption phenotype">
    <text evidence="2 5">Deletion mutant has no detectable level of YopN secretion, YscF expression or YscEFG assembly, but it expresses normal levels of another Ysc component, YscJ/SctJ (PubMed:29458689). Deletion mutant fails to secrete YopE at 37 degrees Celsius in the presence or absence of calcium (PubMed:11035761).</text>
</comment>
<comment type="similarity">
    <text evidence="7">Belongs to the YscE family.</text>
</comment>
<name>YSCE_YERPE</name>
<gene>
    <name evidence="6" type="primary">yscE</name>
    <name evidence="8" type="synonym">Y0027</name>
    <name evidence="10" type="ordered locus">YPCD1.54</name>
    <name evidence="9" type="ORF">EGX46_00100</name>
</gene>
<feature type="chain" id="PRO_0000458455" description="Type 3 secretion system chaperone YscE">
    <location>
        <begin position="1"/>
        <end position="66"/>
    </location>
</feature>
<feature type="helix" evidence="13">
    <location>
        <begin position="2"/>
        <end position="32"/>
    </location>
</feature>
<feature type="helix" evidence="13">
    <location>
        <begin position="38"/>
        <end position="62"/>
    </location>
</feature>
<geneLocation type="plasmid">
    <name>pCD1</name>
</geneLocation>
<geneLocation type="plasmid">
    <name>unnamed1</name>
</geneLocation>
<proteinExistence type="evidence at protein level"/>
<accession>O68692</accession>
<accession>A0A0H2W050</accession>
<accession>A0A2U2GUL9</accession>
<accession>A0A380SD15</accession>
<accession>A0A384KN33</accession>
<accession>Q74YY0</accession>
<accession>Q7ARI1</accession>
<organism>
    <name type="scientific">Yersinia pestis</name>
    <dbReference type="NCBI Taxonomy" id="632"/>
    <lineage>
        <taxon>Bacteria</taxon>
        <taxon>Pseudomonadati</taxon>
        <taxon>Pseudomonadota</taxon>
        <taxon>Gammaproteobacteria</taxon>
        <taxon>Enterobacterales</taxon>
        <taxon>Yersiniaceae</taxon>
        <taxon>Yersinia</taxon>
    </lineage>
</organism>
<dbReference type="EMBL" id="AF074612">
    <property type="protein sequence ID" value="AAC69779.1"/>
    <property type="molecule type" value="Genomic_DNA"/>
</dbReference>
<dbReference type="EMBL" id="AF053946">
    <property type="protein sequence ID" value="AAC62550.1"/>
    <property type="molecule type" value="Genomic_DNA"/>
</dbReference>
<dbReference type="EMBL" id="HQ612242">
    <property type="protein sequence ID" value="ADV16643.1"/>
    <property type="molecule type" value="Genomic_DNA"/>
</dbReference>
<dbReference type="EMBL" id="AL117189">
    <property type="protein sequence ID" value="CAB54931.1"/>
    <property type="molecule type" value="Genomic_DNA"/>
</dbReference>
<dbReference type="EMBL" id="CP033697">
    <property type="protein sequence ID" value="AYX17968.1"/>
    <property type="molecule type" value="Genomic_DNA"/>
</dbReference>
<dbReference type="PIR" id="T43571">
    <property type="entry name" value="T43571"/>
</dbReference>
<dbReference type="RefSeq" id="NP_395188.1">
    <property type="nucleotide sequence ID" value="NC_003131.1"/>
</dbReference>
<dbReference type="RefSeq" id="NP_857728.1">
    <property type="nucleotide sequence ID" value="NC_004836.1"/>
</dbReference>
<dbReference type="RefSeq" id="NP_857923.1">
    <property type="nucleotide sequence ID" value="NC_004839.1"/>
</dbReference>
<dbReference type="RefSeq" id="WP_002212917.1">
    <property type="nucleotide sequence ID" value="NZ_WUCM01000070.1"/>
</dbReference>
<dbReference type="PDB" id="1ZW0">
    <property type="method" value="X-ray"/>
    <property type="resolution" value="1.80 A"/>
    <property type="chains" value="A/B/C/D/E/F/G/H=1-66"/>
</dbReference>
<dbReference type="PDB" id="2P58">
    <property type="method" value="X-ray"/>
    <property type="resolution" value="1.80 A"/>
    <property type="chains" value="A=2-66"/>
</dbReference>
<dbReference type="PDBsum" id="1ZW0"/>
<dbReference type="PDBsum" id="2P58"/>
<dbReference type="SMR" id="O68692"/>
<dbReference type="IntAct" id="O68692">
    <property type="interactions" value="1"/>
</dbReference>
<dbReference type="MINT" id="O68692"/>
<dbReference type="PaxDb" id="214092-5832474"/>
<dbReference type="DNASU" id="1149287"/>
<dbReference type="KEGG" id="ype:YPCD1.54"/>
<dbReference type="PATRIC" id="fig|214092.21.peg.64"/>
<dbReference type="eggNOG" id="ENOG5031D1W">
    <property type="taxonomic scope" value="Bacteria"/>
</dbReference>
<dbReference type="HOGENOM" id="CLU_202959_0_0_6"/>
<dbReference type="OrthoDB" id="7013765at2"/>
<dbReference type="EvolutionaryTrace" id="O68692"/>
<dbReference type="Proteomes" id="UP000000815">
    <property type="component" value="Plasmid pCD1"/>
</dbReference>
<dbReference type="GO" id="GO:0005737">
    <property type="term" value="C:cytoplasm"/>
    <property type="evidence" value="ECO:0007669"/>
    <property type="project" value="UniProtKB-SubCell"/>
</dbReference>
<dbReference type="Gene3D" id="1.20.5.420">
    <property type="entry name" value="Immunoglobulin FC, subunit C"/>
    <property type="match status" value="1"/>
</dbReference>
<dbReference type="InterPro" id="IPR012671">
    <property type="entry name" value="T3SS_PscE/YscE"/>
</dbReference>
<dbReference type="NCBIfam" id="TIGR02501">
    <property type="entry name" value="type_III_yscE"/>
    <property type="match status" value="1"/>
</dbReference>
<dbReference type="Pfam" id="PF08988">
    <property type="entry name" value="T3SS_needle_E"/>
    <property type="match status" value="1"/>
</dbReference>
<reference key="1">
    <citation type="journal article" date="1998" name="Infect. Immun.">
        <title>DNA sequencing and analysis of the low-Ca2+-response plasmid pCD1 of Yersinia pestis KIM5.</title>
        <authorList>
            <person name="Perry R.D."/>
            <person name="Straley S.C."/>
            <person name="Fetherston J.D."/>
            <person name="Rose D.J."/>
            <person name="Gregor J."/>
            <person name="Blattner F.R."/>
        </authorList>
    </citation>
    <scope>NUCLEOTIDE SEQUENCE [GENOMIC DNA]</scope>
    <source>
        <strain>KIM5 / Biovar Mediaevalis</strain>
    </source>
</reference>
<reference key="2">
    <citation type="journal article" date="1998" name="J. Bacteriol.">
        <title>Structural organization of virulence-associated plasmids of Yersinia pestis.</title>
        <authorList>
            <person name="Hu P."/>
            <person name="Elliott J."/>
            <person name="McCready P."/>
            <person name="Skowronski E."/>
            <person name="Garnes J."/>
            <person name="Kobayashi A."/>
            <person name="Brubaker R.R."/>
            <person name="Garcia E."/>
        </authorList>
    </citation>
    <scope>NUCLEOTIDE SEQUENCE [GENOMIC DNA]</scope>
    <source>
        <strain>KIM5 / Biovar Mediaevalis</strain>
    </source>
</reference>
<reference key="3">
    <citation type="journal article" date="2010" name="Int. J. Microbiol.">
        <title>Characterization of pPCP1 plasmids in Yersinia pestis strains isolated from the former Soviet Union.</title>
        <authorList>
            <person name="Rajanna C."/>
            <person name="Revazishvili T."/>
            <person name="Rashid M.H."/>
            <person name="Chubinidze S."/>
            <person name="Bakanidze L."/>
            <person name="Tsanava S."/>
            <person name="Imnadze P."/>
            <person name="Bishop-Lilly K.A."/>
            <person name="Sozhamannan S."/>
            <person name="Gibbons H.S."/>
            <person name="Morris J.G."/>
            <person name="Sulakvelidze A."/>
        </authorList>
    </citation>
    <scope>NUCLEOTIDE SEQUENCE [GENOMIC DNA]</scope>
    <source>
        <strain>C790</strain>
    </source>
</reference>
<reference key="4">
    <citation type="journal article" date="2001" name="Nature">
        <title>Genome sequence of Yersinia pestis, the causative agent of plague.</title>
        <authorList>
            <person name="Parkhill J."/>
            <person name="Wren B.W."/>
            <person name="Thomson N.R."/>
            <person name="Titball R.W."/>
            <person name="Holden M.T.G."/>
            <person name="Prentice M.B."/>
            <person name="Sebaihia M."/>
            <person name="James K.D."/>
            <person name="Churcher C.M."/>
            <person name="Mungall K.L."/>
            <person name="Baker S."/>
            <person name="Basham D."/>
            <person name="Bentley S.D."/>
            <person name="Brooks K."/>
            <person name="Cerdeno-Tarraga A.-M."/>
            <person name="Chillingworth T."/>
            <person name="Cronin A."/>
            <person name="Davies R.M."/>
            <person name="Davis P."/>
            <person name="Dougan G."/>
            <person name="Feltwell T."/>
            <person name="Hamlin N."/>
            <person name="Holroyd S."/>
            <person name="Jagels K."/>
            <person name="Karlyshev A.V."/>
            <person name="Leather S."/>
            <person name="Moule S."/>
            <person name="Oyston P.C.F."/>
            <person name="Quail M.A."/>
            <person name="Rutherford K.M."/>
            <person name="Simmonds M."/>
            <person name="Skelton J."/>
            <person name="Stevens K."/>
            <person name="Whitehead S."/>
            <person name="Barrell B.G."/>
        </authorList>
    </citation>
    <scope>NUCLEOTIDE SEQUENCE [LARGE SCALE GENOMIC DNA]</scope>
    <source>
        <strain>CO-92 / Biovar Orientalis</strain>
    </source>
</reference>
<reference key="5">
    <citation type="submission" date="2018-11" db="EMBL/GenBank/DDBJ databases">
        <title>FDA dAtabase for Regulatory Grade micrObial Sequences (FDA-ARGOS): Supporting development and validation of Infectious Disease Dx tests.</title>
        <authorList>
            <person name="Minogue T."/>
            <person name="Wolcott M."/>
            <person name="Wasieloski L."/>
            <person name="Aguilar W."/>
            <person name="Moore D."/>
            <person name="Jaissle J."/>
            <person name="Tallon L."/>
            <person name="Sadzewicz L."/>
            <person name="Zhao X."/>
            <person name="Vavikolanu K."/>
            <person name="Mehta A."/>
            <person name="Aluvathingal J."/>
            <person name="Nadendla S."/>
            <person name="Yan Y."/>
            <person name="Sichtig H."/>
        </authorList>
    </citation>
    <scope>NUCLEOTIDE SEQUENCE [LARGE SCALE GENOMIC DNA]</scope>
    <source>
        <strain>FDAARGOS_601</strain>
        <plasmid>unnamed1</plasmid>
    </source>
</reference>
<reference key="6">
    <citation type="journal article" date="2000" name="Infect. Immun.">
        <title>Yersinia pestis YscG protein is a Syc-like chaperone that directly binds yscE.</title>
        <authorList>
            <person name="Day J.B."/>
            <person name="Guller I."/>
            <person name="Plano G.V."/>
        </authorList>
    </citation>
    <scope>FUNCTION</scope>
    <scope>INTERACTION WITH YSCG</scope>
    <scope>SUBCELLULAR LOCATION</scope>
    <scope>DISRUPTION PHENOTYPE</scope>
</reference>
<reference key="7">
    <citation type="journal article" date="2018" name="Microbiology">
        <title>The YscE/YscG chaperone and YscF N-terminal sequences target YscF to the Yersinia pestis type III secretion apparatus.</title>
        <authorList>
            <person name="Souza C.A."/>
            <person name="Richards K.L."/>
            <person name="Park Y."/>
            <person name="Schwartz M."/>
            <person name="Torruellas Garcia J."/>
            <person name="Schesser Bartra S."/>
            <person name="Plano G.V."/>
        </authorList>
    </citation>
    <scope>FUNCTION</scope>
    <scope>SUBUNIT</scope>
    <scope>DISRUPTION PHENOTYPE</scope>
    <source>
        <strain>KIM5-3001</strain>
    </source>
</reference>
<reference evidence="11" key="8">
    <citation type="journal article" date="2005" name="Protein Sci.">
        <title>Crystal structure of the Yersinia type III secretion protein YscE.</title>
        <authorList>
            <person name="Phan J."/>
            <person name="Austin B.P."/>
            <person name="Waugh D.S."/>
        </authorList>
    </citation>
    <scope>X-RAY CRYSTALLOGRAPHY (1.80 ANGSTROMS)</scope>
    <scope>SUBUNIT</scope>
</reference>
<reference evidence="12" key="9">
    <citation type="journal article" date="2008" name="J. Mol. Biol.">
        <title>Structural characterization of the Yersinia pestis type III secretion system needle protein YscF in complex with its heterodimeric chaperone YscE/YscG.</title>
        <authorList>
            <person name="Sun P."/>
            <person name="Tropea J.E."/>
            <person name="Austin B.P."/>
            <person name="Cherry S."/>
            <person name="Waugh D.S."/>
        </authorList>
    </citation>
    <scope>X-RAY CRYSTALLOGRAPHY (1.80 ANGSTROMS) OF 2-66 IN COMPLEX WITH YSCG AND YSCF/SCTF</scope>
    <scope>FUNCTION</scope>
    <scope>SUBUNIT</scope>
</reference>
<sequence length="66" mass="7606">MTQLEEQLHNVETVRSITMQLEMALTKLKKDMMRGGDAKQYQVWQRESKALESAIAIIHYVAGDLK</sequence>